<feature type="chain" id="PRO_0000211782" description="Pyrimidine/purine nucleoside phosphorylase">
    <location>
        <begin position="1"/>
        <end position="103"/>
    </location>
</feature>
<reference key="1">
    <citation type="journal article" date="2002" name="Nat. Biotechnol.">
        <title>Genome sequence of the dissimilatory metal ion-reducing bacterium Shewanella oneidensis.</title>
        <authorList>
            <person name="Heidelberg J.F."/>
            <person name="Paulsen I.T."/>
            <person name="Nelson K.E."/>
            <person name="Gaidos E.J."/>
            <person name="Nelson W.C."/>
            <person name="Read T.D."/>
            <person name="Eisen J.A."/>
            <person name="Seshadri R."/>
            <person name="Ward N.L."/>
            <person name="Methe B.A."/>
            <person name="Clayton R.A."/>
            <person name="Meyer T."/>
            <person name="Tsapin A."/>
            <person name="Scott J."/>
            <person name="Beanan M.J."/>
            <person name="Brinkac L.M."/>
            <person name="Daugherty S.C."/>
            <person name="DeBoy R.T."/>
            <person name="Dodson R.J."/>
            <person name="Durkin A.S."/>
            <person name="Haft D.H."/>
            <person name="Kolonay J.F."/>
            <person name="Madupu R."/>
            <person name="Peterson J.D."/>
            <person name="Umayam L.A."/>
            <person name="White O."/>
            <person name="Wolf A.M."/>
            <person name="Vamathevan J.J."/>
            <person name="Weidman J.F."/>
            <person name="Impraim M."/>
            <person name="Lee K."/>
            <person name="Berry K.J."/>
            <person name="Lee C."/>
            <person name="Mueller J."/>
            <person name="Khouri H.M."/>
            <person name="Gill J."/>
            <person name="Utterback T.R."/>
            <person name="McDonald L.A."/>
            <person name="Feldblyum T.V."/>
            <person name="Smith H.O."/>
            <person name="Venter J.C."/>
            <person name="Nealson K.H."/>
            <person name="Fraser C.M."/>
        </authorList>
    </citation>
    <scope>NUCLEOTIDE SEQUENCE [LARGE SCALE GENOMIC DNA]</scope>
    <source>
        <strain>ATCC 700550 / JCM 31522 / CIP 106686 / LMG 19005 / NCIMB 14063 / MR-1</strain>
    </source>
</reference>
<organism>
    <name type="scientific">Shewanella oneidensis (strain ATCC 700550 / JCM 31522 / CIP 106686 / LMG 19005 / NCIMB 14063 / MR-1)</name>
    <dbReference type="NCBI Taxonomy" id="211586"/>
    <lineage>
        <taxon>Bacteria</taxon>
        <taxon>Pseudomonadati</taxon>
        <taxon>Pseudomonadota</taxon>
        <taxon>Gammaproteobacteria</taxon>
        <taxon>Alteromonadales</taxon>
        <taxon>Shewanellaceae</taxon>
        <taxon>Shewanella</taxon>
    </lineage>
</organism>
<sequence length="103" mass="11387">MELIEQVAVAKKANIYFEGKVASRSVFFSDGSKQTLGVVLPGEYEFSTSQGEIMHVTSGSFEVLLPNSSTWQAFSEGSQFELAANVSFKIRNNAIAEYCCRYL</sequence>
<accession>Q8E927</accession>
<keyword id="KW-0328">Glycosyltransferase</keyword>
<keyword id="KW-1185">Reference proteome</keyword>
<keyword id="KW-0808">Transferase</keyword>
<gene>
    <name evidence="1" type="primary">ppnP</name>
    <name type="ordered locus">SO_4467</name>
</gene>
<protein>
    <recommendedName>
        <fullName evidence="1">Pyrimidine/purine nucleoside phosphorylase</fullName>
        <ecNumber evidence="1">2.4.2.1</ecNumber>
        <ecNumber evidence="1">2.4.2.2</ecNumber>
    </recommendedName>
    <alternativeName>
        <fullName evidence="1">Adenosine phosphorylase</fullName>
    </alternativeName>
    <alternativeName>
        <fullName evidence="1">Cytidine phosphorylase</fullName>
    </alternativeName>
    <alternativeName>
        <fullName evidence="1">Guanosine phosphorylase</fullName>
    </alternativeName>
    <alternativeName>
        <fullName evidence="1">Inosine phosphorylase</fullName>
    </alternativeName>
    <alternativeName>
        <fullName evidence="1">Thymidine phosphorylase</fullName>
    </alternativeName>
    <alternativeName>
        <fullName evidence="1">Uridine phosphorylase</fullName>
    </alternativeName>
    <alternativeName>
        <fullName evidence="1">Xanthosine phosphorylase</fullName>
    </alternativeName>
</protein>
<evidence type="ECO:0000255" key="1">
    <source>
        <dbReference type="HAMAP-Rule" id="MF_01537"/>
    </source>
</evidence>
<name>PPNP_SHEON</name>
<dbReference type="EC" id="2.4.2.1" evidence="1"/>
<dbReference type="EC" id="2.4.2.2" evidence="1"/>
<dbReference type="EMBL" id="AE014299">
    <property type="protein sequence ID" value="AAN57432.1"/>
    <property type="molecule type" value="Genomic_DNA"/>
</dbReference>
<dbReference type="RefSeq" id="NP_719988.1">
    <property type="nucleotide sequence ID" value="NC_004347.2"/>
</dbReference>
<dbReference type="RefSeq" id="WP_011074096.1">
    <property type="nucleotide sequence ID" value="NC_004347.2"/>
</dbReference>
<dbReference type="SMR" id="Q8E927"/>
<dbReference type="STRING" id="211586.SO_4467"/>
<dbReference type="PaxDb" id="211586-SO_4467"/>
<dbReference type="KEGG" id="son:SO_4467"/>
<dbReference type="PATRIC" id="fig|1028802.3.peg.600"/>
<dbReference type="eggNOG" id="COG3123">
    <property type="taxonomic scope" value="Bacteria"/>
</dbReference>
<dbReference type="HOGENOM" id="CLU_157874_1_0_6"/>
<dbReference type="OrthoDB" id="9793848at2"/>
<dbReference type="PhylomeDB" id="Q8E927"/>
<dbReference type="BioCyc" id="SONE211586:G1GMP-4124-MONOMER"/>
<dbReference type="BRENDA" id="2.4.2.3">
    <property type="organism ID" value="5706"/>
</dbReference>
<dbReference type="Proteomes" id="UP000008186">
    <property type="component" value="Chromosome"/>
</dbReference>
<dbReference type="GO" id="GO:0005829">
    <property type="term" value="C:cytosol"/>
    <property type="evidence" value="ECO:0000318"/>
    <property type="project" value="GO_Central"/>
</dbReference>
<dbReference type="GO" id="GO:0047975">
    <property type="term" value="F:guanosine phosphorylase activity"/>
    <property type="evidence" value="ECO:0007669"/>
    <property type="project" value="UniProtKB-EC"/>
</dbReference>
<dbReference type="GO" id="GO:0004731">
    <property type="term" value="F:purine-nucleoside phosphorylase activity"/>
    <property type="evidence" value="ECO:0000318"/>
    <property type="project" value="GO_Central"/>
</dbReference>
<dbReference type="GO" id="GO:0016154">
    <property type="term" value="F:pyrimidine-nucleoside phosphorylase activity"/>
    <property type="evidence" value="ECO:0000318"/>
    <property type="project" value="GO_Central"/>
</dbReference>
<dbReference type="GO" id="GO:0009032">
    <property type="term" value="F:thymidine phosphorylase activity"/>
    <property type="evidence" value="ECO:0007669"/>
    <property type="project" value="UniProtKB-EC"/>
</dbReference>
<dbReference type="GO" id="GO:0004850">
    <property type="term" value="F:uridine phosphorylase activity"/>
    <property type="evidence" value="ECO:0007669"/>
    <property type="project" value="UniProtKB-EC"/>
</dbReference>
<dbReference type="CDD" id="cd20296">
    <property type="entry name" value="cupin_PpnP-like"/>
    <property type="match status" value="1"/>
</dbReference>
<dbReference type="FunFam" id="2.60.120.10:FF:000016">
    <property type="entry name" value="Pyrimidine/purine nucleoside phosphorylase"/>
    <property type="match status" value="1"/>
</dbReference>
<dbReference type="Gene3D" id="2.60.120.10">
    <property type="entry name" value="Jelly Rolls"/>
    <property type="match status" value="1"/>
</dbReference>
<dbReference type="HAMAP" id="MF_01537">
    <property type="entry name" value="Nucleos_phosphorylase_PpnP"/>
    <property type="match status" value="1"/>
</dbReference>
<dbReference type="InterPro" id="IPR009664">
    <property type="entry name" value="Ppnp"/>
</dbReference>
<dbReference type="InterPro" id="IPR014710">
    <property type="entry name" value="RmlC-like_jellyroll"/>
</dbReference>
<dbReference type="InterPro" id="IPR011051">
    <property type="entry name" value="RmlC_Cupin_sf"/>
</dbReference>
<dbReference type="PANTHER" id="PTHR36540">
    <property type="entry name" value="PYRIMIDINE/PURINE NUCLEOSIDE PHOSPHORYLASE"/>
    <property type="match status" value="1"/>
</dbReference>
<dbReference type="PANTHER" id="PTHR36540:SF1">
    <property type="entry name" value="PYRIMIDINE_PURINE NUCLEOSIDE PHOSPHORYLASE"/>
    <property type="match status" value="1"/>
</dbReference>
<dbReference type="Pfam" id="PF06865">
    <property type="entry name" value="Ppnp"/>
    <property type="match status" value="1"/>
</dbReference>
<dbReference type="SUPFAM" id="SSF51182">
    <property type="entry name" value="RmlC-like cupins"/>
    <property type="match status" value="1"/>
</dbReference>
<comment type="function">
    <text evidence="1">Catalyzes the phosphorolysis of diverse nucleosides, yielding D-ribose 1-phosphate and the respective free bases. Can use uridine, adenosine, guanosine, cytidine, thymidine, inosine and xanthosine as substrates. Also catalyzes the reverse reactions.</text>
</comment>
<comment type="catalytic activity">
    <reaction evidence="1">
        <text>a purine D-ribonucleoside + phosphate = a purine nucleobase + alpha-D-ribose 1-phosphate</text>
        <dbReference type="Rhea" id="RHEA:19805"/>
        <dbReference type="ChEBI" id="CHEBI:26386"/>
        <dbReference type="ChEBI" id="CHEBI:43474"/>
        <dbReference type="ChEBI" id="CHEBI:57720"/>
        <dbReference type="ChEBI" id="CHEBI:142355"/>
        <dbReference type="EC" id="2.4.2.1"/>
    </reaction>
</comment>
<comment type="catalytic activity">
    <reaction evidence="1">
        <text>adenosine + phosphate = alpha-D-ribose 1-phosphate + adenine</text>
        <dbReference type="Rhea" id="RHEA:27642"/>
        <dbReference type="ChEBI" id="CHEBI:16335"/>
        <dbReference type="ChEBI" id="CHEBI:16708"/>
        <dbReference type="ChEBI" id="CHEBI:43474"/>
        <dbReference type="ChEBI" id="CHEBI:57720"/>
        <dbReference type="EC" id="2.4.2.1"/>
    </reaction>
</comment>
<comment type="catalytic activity">
    <reaction evidence="1">
        <text>cytidine + phosphate = cytosine + alpha-D-ribose 1-phosphate</text>
        <dbReference type="Rhea" id="RHEA:52540"/>
        <dbReference type="ChEBI" id="CHEBI:16040"/>
        <dbReference type="ChEBI" id="CHEBI:17562"/>
        <dbReference type="ChEBI" id="CHEBI:43474"/>
        <dbReference type="ChEBI" id="CHEBI:57720"/>
        <dbReference type="EC" id="2.4.2.2"/>
    </reaction>
</comment>
<comment type="catalytic activity">
    <reaction evidence="1">
        <text>guanosine + phosphate = alpha-D-ribose 1-phosphate + guanine</text>
        <dbReference type="Rhea" id="RHEA:13233"/>
        <dbReference type="ChEBI" id="CHEBI:16235"/>
        <dbReference type="ChEBI" id="CHEBI:16750"/>
        <dbReference type="ChEBI" id="CHEBI:43474"/>
        <dbReference type="ChEBI" id="CHEBI:57720"/>
        <dbReference type="EC" id="2.4.2.1"/>
    </reaction>
</comment>
<comment type="catalytic activity">
    <reaction evidence="1">
        <text>inosine + phosphate = alpha-D-ribose 1-phosphate + hypoxanthine</text>
        <dbReference type="Rhea" id="RHEA:27646"/>
        <dbReference type="ChEBI" id="CHEBI:17368"/>
        <dbReference type="ChEBI" id="CHEBI:17596"/>
        <dbReference type="ChEBI" id="CHEBI:43474"/>
        <dbReference type="ChEBI" id="CHEBI:57720"/>
        <dbReference type="EC" id="2.4.2.1"/>
    </reaction>
</comment>
<comment type="catalytic activity">
    <reaction evidence="1">
        <text>thymidine + phosphate = 2-deoxy-alpha-D-ribose 1-phosphate + thymine</text>
        <dbReference type="Rhea" id="RHEA:16037"/>
        <dbReference type="ChEBI" id="CHEBI:17748"/>
        <dbReference type="ChEBI" id="CHEBI:17821"/>
        <dbReference type="ChEBI" id="CHEBI:43474"/>
        <dbReference type="ChEBI" id="CHEBI:57259"/>
        <dbReference type="EC" id="2.4.2.2"/>
    </reaction>
</comment>
<comment type="catalytic activity">
    <reaction evidence="1">
        <text>uridine + phosphate = alpha-D-ribose 1-phosphate + uracil</text>
        <dbReference type="Rhea" id="RHEA:24388"/>
        <dbReference type="ChEBI" id="CHEBI:16704"/>
        <dbReference type="ChEBI" id="CHEBI:17568"/>
        <dbReference type="ChEBI" id="CHEBI:43474"/>
        <dbReference type="ChEBI" id="CHEBI:57720"/>
        <dbReference type="EC" id="2.4.2.2"/>
    </reaction>
</comment>
<comment type="catalytic activity">
    <reaction evidence="1">
        <text>xanthosine + phosphate = alpha-D-ribose 1-phosphate + xanthine</text>
        <dbReference type="Rhea" id="RHEA:27638"/>
        <dbReference type="ChEBI" id="CHEBI:17712"/>
        <dbReference type="ChEBI" id="CHEBI:18107"/>
        <dbReference type="ChEBI" id="CHEBI:43474"/>
        <dbReference type="ChEBI" id="CHEBI:57720"/>
        <dbReference type="EC" id="2.4.2.1"/>
    </reaction>
</comment>
<comment type="similarity">
    <text evidence="1">Belongs to the nucleoside phosphorylase PpnP family.</text>
</comment>
<proteinExistence type="inferred from homology"/>